<accession>B4JHJ7</accession>
<sequence length="1941" mass="216882">MSNFLKPNTLHVDSLSPRHRSLSSGLSSGLSSACSSGSVSPVPIIPIIAISRIRDGDESESESEIELEPARIFHRRMSINNSGNNKRSTNLASIIKEGYLLKHTWSFQRWRRRYFRLKRNHLYYAKDAKCDVFDEIDLSELCYFECSIKNVNHSFQIITPTRSVVLCADSRRDMEDWLGSLKAATAPQRPRGDSILIDQHDILSNHHHWYATSHARPTYCNVCRDALSGVTSHGLSCEVCKCKVHKRCAAKAIANCKWTTLATVGKDIIEQPDGSIIMPHQWMEGNLPVSSICAVCKKTCGSVLRLQDWRCLWCRDTVHVACRPQMAIACPIGPAKLSVVPPTSVHSISTDDAWDVASPKGNFSPLLVFVNSKSGDNQGVKFLRRFKQLLNPAQVFDLISTGPSLGLRLFRHFEMFRILVCSGDGSVGWVLSEIDRFNMHKQCQVAVMPLGTGNDLARVLGWGSSCDDDTHLPQILERYESASTKMLDRWSIMVFEKAISVPKIPKMSITTEQEAVLTGMVTAANQHLRLIVETNDTQTLISSTRNLCDTIDDLVSRIFEHHKDDEQLAVKCDILKQKLTMLLDALQEEEIGAHSGDDLIATIRSLIARSVPSTNSARPSLLNPNISIEKTEKDHINLKERRSSRSLRSSEKEALQCRANSVKRAIYNVVEHSEPGRPKRYQRKLSITPFEALKIPTNSGESTPCSSPLPIIPPINIISPTMETSRLTCISPLPDTRRDSVDENFFNSINLPAPRQFADSRRSSGVPEVIQELEEGANGETIYRIGRLSLSGGANIDDAGNRLSPVSDGGDNSPIDRKLDFLRVPIITSDSIVDPLSDYRPIEVFERTYYMARELDKDKDKERKQDVVLDGEKEEDAGVNEKCEEQTLHPQNTLVHTCNLQVPGIVVTPQSQNVYTSDSITIIDTDQQSNTLQEQSSSEELGCDASDVLSAISNEECSVASEIFDKAETGHTLGDIIQNLDASNFTHIDSPETSDETEAMPGESLMDDISSVLGHDITNALQDNTITDDTTTLCSEHMGPPKPPRKKSMSALSKSQIHPRRRNSSPPRMARLARMDSDDNPQQFGFENIVFEIDNRCDDQKMREPPRYCSLAQFVEGNDIARQSFKQLMLECNSNNNSNNNSNSNSNNNNHNDGNSNDEPETPTNTVITLAHSQLTTTSTSDELDELSTQTAIKIEIHDADSSTMCTTTATTKPLESAMASSTSPTKRSGLGQDISVVVRPPTPLRGDSIKPTPSSSSILSSSLLGVRSLNSSEIRRHSSHAPSLAVREYDKDKDRRHSGFNPNYLALDPEHARFLSSSPAASRRISCGSLFKKNQKYYTKRTYGLFRVRFFVVAEPDIRLATLALIRPLIPLPNEALPNLQTLKGSKSSLFMGSTLFGFEHFSDKEERQGKDKERTPPEETSRKMPIINPIVRLPNWPNLANGTGFISKCLLANADTLCAAVSPLMDPDETLLAGYHEKCVMNNYFGIGIDAKISLDFHNKREEHPEKCRSRARNYMWYGVLGSKQLLQKTCKNLEQRVQLECDGQRIPLPELQGIVILNIPSFMGGTNFWGSSTKKDDIFLPPSFDDRVLEVVAVFGSVQMAASRLINLQHHRIAQCQSVQINILGDEEIPIQVDGEAWLQPPGMIRILHKNRVQMLCRNRSLEVSLKSWQEKQRQHSISIQRDASSTASEHAVSTDDVISERECYVLLNFIEAVSSLVKWVKFLIISHPALQHDLYEVACRASEALESIHPQGKLLEGPSLRTKLVEVIDSSRQLYDDACTLLRDRGHSLILREDLETKLSAALANMEMELKKCSVQKCIDGKLRAYFNVLAPNEESDGRRKSRPFWVRLRSGSTAGQQQFKPPMTNTREAANNWSVNEVVTWLETMQLSEYVDSFLKNDIRGKELLTLGRRDLKDLGVVKVGHVKRILQAIKDLSEN</sequence>
<protein>
    <recommendedName>
        <fullName evidence="1">Diacylglycerol kinase eta</fullName>
        <shortName evidence="1">DAG kinase eta</shortName>
        <ecNumber>2.7.1.107</ecNumber>
    </recommendedName>
</protein>
<reference evidence="8" key="1">
    <citation type="journal article" date="2007" name="Nature">
        <title>Evolution of genes and genomes on the Drosophila phylogeny.</title>
        <authorList>
            <consortium name="Drosophila 12 genomes consortium"/>
        </authorList>
    </citation>
    <scope>NUCLEOTIDE SEQUENCE [LARGE SCALE GENOMIC DNA]</scope>
    <source>
        <strain evidence="8">Tucson 15287-2541.00</strain>
    </source>
</reference>
<dbReference type="EC" id="2.7.1.107"/>
<dbReference type="EMBL" id="CH916369">
    <property type="protein sequence ID" value="EDV92824.1"/>
    <property type="molecule type" value="Genomic_DNA"/>
</dbReference>
<dbReference type="RefSeq" id="XP_001989762.1">
    <property type="nucleotide sequence ID" value="XM_001989726.1"/>
</dbReference>
<dbReference type="SMR" id="B4JHJ7"/>
<dbReference type="FunCoup" id="B4JHJ7">
    <property type="interactions" value="324"/>
</dbReference>
<dbReference type="STRING" id="7222.B4JHJ7"/>
<dbReference type="eggNOG" id="KOG1170">
    <property type="taxonomic scope" value="Eukaryota"/>
</dbReference>
<dbReference type="HOGENOM" id="CLU_001799_1_1_1"/>
<dbReference type="InParanoid" id="B4JHJ7"/>
<dbReference type="OMA" id="SKAPCEK"/>
<dbReference type="OrthoDB" id="196165at2759"/>
<dbReference type="PhylomeDB" id="B4JHJ7"/>
<dbReference type="Proteomes" id="UP000001070">
    <property type="component" value="Unassembled WGS sequence"/>
</dbReference>
<dbReference type="GO" id="GO:0005737">
    <property type="term" value="C:cytoplasm"/>
    <property type="evidence" value="ECO:0007669"/>
    <property type="project" value="UniProtKB-SubCell"/>
</dbReference>
<dbReference type="GO" id="GO:0005886">
    <property type="term" value="C:plasma membrane"/>
    <property type="evidence" value="ECO:0007669"/>
    <property type="project" value="TreeGrafter"/>
</dbReference>
<dbReference type="GO" id="GO:0005524">
    <property type="term" value="F:ATP binding"/>
    <property type="evidence" value="ECO:0007669"/>
    <property type="project" value="UniProtKB-KW"/>
</dbReference>
<dbReference type="GO" id="GO:0004143">
    <property type="term" value="F:ATP-dependent diacylglycerol kinase activity"/>
    <property type="evidence" value="ECO:0007669"/>
    <property type="project" value="UniProtKB-EC"/>
</dbReference>
<dbReference type="GO" id="GO:0008270">
    <property type="term" value="F:zinc ion binding"/>
    <property type="evidence" value="ECO:0007669"/>
    <property type="project" value="UniProtKB-KW"/>
</dbReference>
<dbReference type="GO" id="GO:0046486">
    <property type="term" value="P:glycerolipid metabolic process"/>
    <property type="evidence" value="ECO:0007669"/>
    <property type="project" value="UniProtKB-ARBA"/>
</dbReference>
<dbReference type="GO" id="GO:0007200">
    <property type="term" value="P:phospholipase C-activating G protein-coupled receptor signaling pathway"/>
    <property type="evidence" value="ECO:0007669"/>
    <property type="project" value="InterPro"/>
</dbReference>
<dbReference type="CDD" id="cd20800">
    <property type="entry name" value="C1_DGK_typeII_rpt1"/>
    <property type="match status" value="1"/>
</dbReference>
<dbReference type="CDD" id="cd20852">
    <property type="entry name" value="C1_DGK_typeII_rpt2"/>
    <property type="match status" value="1"/>
</dbReference>
<dbReference type="CDD" id="cd13274">
    <property type="entry name" value="PH_DGK_type2"/>
    <property type="match status" value="1"/>
</dbReference>
<dbReference type="CDD" id="cd09507">
    <property type="entry name" value="SAM_DGK-delta-eta"/>
    <property type="match status" value="1"/>
</dbReference>
<dbReference type="FunFam" id="1.10.150.50:FF:000021">
    <property type="entry name" value="Diacylglycerol kinase"/>
    <property type="match status" value="1"/>
</dbReference>
<dbReference type="FunFam" id="2.30.29.30:FF:000313">
    <property type="entry name" value="Diacylglycerol kinase"/>
    <property type="match status" value="1"/>
</dbReference>
<dbReference type="FunFam" id="2.60.200.40:FF:000001">
    <property type="entry name" value="Diacylglycerol kinase"/>
    <property type="match status" value="1"/>
</dbReference>
<dbReference type="FunFam" id="3.30.60.20:FF:000002">
    <property type="entry name" value="Diacylglycerol kinase"/>
    <property type="match status" value="1"/>
</dbReference>
<dbReference type="FunFam" id="3.30.60.20:FF:000029">
    <property type="entry name" value="Diacylglycerol kinase"/>
    <property type="match status" value="1"/>
</dbReference>
<dbReference type="FunFam" id="3.40.50.10330:FF:000001">
    <property type="entry name" value="Diacylglycerol kinase"/>
    <property type="match status" value="1"/>
</dbReference>
<dbReference type="Gene3D" id="2.60.200.40">
    <property type="match status" value="1"/>
</dbReference>
<dbReference type="Gene3D" id="3.30.60.20">
    <property type="match status" value="2"/>
</dbReference>
<dbReference type="Gene3D" id="2.30.29.30">
    <property type="entry name" value="Pleckstrin-homology domain (PH domain)/Phosphotyrosine-binding domain (PTB)"/>
    <property type="match status" value="1"/>
</dbReference>
<dbReference type="Gene3D" id="3.40.50.10330">
    <property type="entry name" value="Probable inorganic polyphosphate/atp-NAD kinase, domain 1"/>
    <property type="match status" value="1"/>
</dbReference>
<dbReference type="Gene3D" id="1.10.150.50">
    <property type="entry name" value="Transcription Factor, Ets-1"/>
    <property type="match status" value="1"/>
</dbReference>
<dbReference type="InterPro" id="IPR017438">
    <property type="entry name" value="ATP-NAD_kinase_N"/>
</dbReference>
<dbReference type="InterPro" id="IPR046349">
    <property type="entry name" value="C1-like_sf"/>
</dbReference>
<dbReference type="InterPro" id="IPR037607">
    <property type="entry name" value="DGK"/>
</dbReference>
<dbReference type="InterPro" id="IPR054474">
    <property type="entry name" value="DGKD_4H"/>
</dbReference>
<dbReference type="InterPro" id="IPR000756">
    <property type="entry name" value="Diacylglycerol_kin_accessory"/>
</dbReference>
<dbReference type="InterPro" id="IPR001206">
    <property type="entry name" value="Diacylglycerol_kinase_cat_dom"/>
</dbReference>
<dbReference type="InterPro" id="IPR016064">
    <property type="entry name" value="NAD/diacylglycerol_kinase_sf"/>
</dbReference>
<dbReference type="InterPro" id="IPR002219">
    <property type="entry name" value="PE/DAG-bd"/>
</dbReference>
<dbReference type="InterPro" id="IPR011993">
    <property type="entry name" value="PH-like_dom_sf"/>
</dbReference>
<dbReference type="InterPro" id="IPR001849">
    <property type="entry name" value="PH_domain"/>
</dbReference>
<dbReference type="InterPro" id="IPR001660">
    <property type="entry name" value="SAM"/>
</dbReference>
<dbReference type="InterPro" id="IPR013761">
    <property type="entry name" value="SAM/pointed_sf"/>
</dbReference>
<dbReference type="PANTHER" id="PTHR11255">
    <property type="entry name" value="DIACYLGLYCEROL KINASE"/>
    <property type="match status" value="1"/>
</dbReference>
<dbReference type="PANTHER" id="PTHR11255:SF109">
    <property type="entry name" value="DIACYLGLYCEROL KINASE ETA"/>
    <property type="match status" value="1"/>
</dbReference>
<dbReference type="Pfam" id="PF00130">
    <property type="entry name" value="C1_1"/>
    <property type="match status" value="2"/>
</dbReference>
<dbReference type="Pfam" id="PF00609">
    <property type="entry name" value="DAGK_acc"/>
    <property type="match status" value="1"/>
</dbReference>
<dbReference type="Pfam" id="PF00781">
    <property type="entry name" value="DAGK_cat"/>
    <property type="match status" value="1"/>
</dbReference>
<dbReference type="Pfam" id="PF22944">
    <property type="entry name" value="DGKD_4H"/>
    <property type="match status" value="1"/>
</dbReference>
<dbReference type="Pfam" id="PF00169">
    <property type="entry name" value="PH"/>
    <property type="match status" value="1"/>
</dbReference>
<dbReference type="Pfam" id="PF00536">
    <property type="entry name" value="SAM_1"/>
    <property type="match status" value="1"/>
</dbReference>
<dbReference type="SMART" id="SM00109">
    <property type="entry name" value="C1"/>
    <property type="match status" value="2"/>
</dbReference>
<dbReference type="SMART" id="SM00045">
    <property type="entry name" value="DAGKa"/>
    <property type="match status" value="1"/>
</dbReference>
<dbReference type="SMART" id="SM00046">
    <property type="entry name" value="DAGKc"/>
    <property type="match status" value="1"/>
</dbReference>
<dbReference type="SMART" id="SM00233">
    <property type="entry name" value="PH"/>
    <property type="match status" value="1"/>
</dbReference>
<dbReference type="SMART" id="SM00454">
    <property type="entry name" value="SAM"/>
    <property type="match status" value="1"/>
</dbReference>
<dbReference type="SUPFAM" id="SSF57889">
    <property type="entry name" value="Cysteine-rich domain"/>
    <property type="match status" value="2"/>
</dbReference>
<dbReference type="SUPFAM" id="SSF111331">
    <property type="entry name" value="NAD kinase/diacylglycerol kinase-like"/>
    <property type="match status" value="2"/>
</dbReference>
<dbReference type="SUPFAM" id="SSF50729">
    <property type="entry name" value="PH domain-like"/>
    <property type="match status" value="1"/>
</dbReference>
<dbReference type="SUPFAM" id="SSF47769">
    <property type="entry name" value="SAM/Pointed domain"/>
    <property type="match status" value="1"/>
</dbReference>
<dbReference type="PROSITE" id="PS50146">
    <property type="entry name" value="DAGK"/>
    <property type="match status" value="1"/>
</dbReference>
<dbReference type="PROSITE" id="PS50003">
    <property type="entry name" value="PH_DOMAIN"/>
    <property type="match status" value="1"/>
</dbReference>
<dbReference type="PROSITE" id="PS50105">
    <property type="entry name" value="SAM_DOMAIN"/>
    <property type="match status" value="1"/>
</dbReference>
<dbReference type="PROSITE" id="PS00479">
    <property type="entry name" value="ZF_DAG_PE_1"/>
    <property type="match status" value="2"/>
</dbReference>
<dbReference type="PROSITE" id="PS50081">
    <property type="entry name" value="ZF_DAG_PE_2"/>
    <property type="match status" value="2"/>
</dbReference>
<organism>
    <name type="scientific">Drosophila grimshawi</name>
    <name type="common">Hawaiian fruit fly</name>
    <name type="synonym">Idiomyia grimshawi</name>
    <dbReference type="NCBI Taxonomy" id="7222"/>
    <lineage>
        <taxon>Eukaryota</taxon>
        <taxon>Metazoa</taxon>
        <taxon>Ecdysozoa</taxon>
        <taxon>Arthropoda</taxon>
        <taxon>Hexapoda</taxon>
        <taxon>Insecta</taxon>
        <taxon>Pterygota</taxon>
        <taxon>Neoptera</taxon>
        <taxon>Endopterygota</taxon>
        <taxon>Diptera</taxon>
        <taxon>Brachycera</taxon>
        <taxon>Muscomorpha</taxon>
        <taxon>Ephydroidea</taxon>
        <taxon>Drosophilidae</taxon>
        <taxon>Drosophila</taxon>
        <taxon>Hawaiian Drosophila</taxon>
    </lineage>
</organism>
<evidence type="ECO:0000250" key="1">
    <source>
        <dbReference type="UniProtKB" id="Q86XP1"/>
    </source>
</evidence>
<evidence type="ECO:0000255" key="2"/>
<evidence type="ECO:0000255" key="3">
    <source>
        <dbReference type="PROSITE-ProRule" id="PRU00145"/>
    </source>
</evidence>
<evidence type="ECO:0000255" key="4">
    <source>
        <dbReference type="PROSITE-ProRule" id="PRU00184"/>
    </source>
</evidence>
<evidence type="ECO:0000255" key="5">
    <source>
        <dbReference type="PROSITE-ProRule" id="PRU00226"/>
    </source>
</evidence>
<evidence type="ECO:0000255" key="6">
    <source>
        <dbReference type="PROSITE-ProRule" id="PRU00783"/>
    </source>
</evidence>
<evidence type="ECO:0000256" key="7">
    <source>
        <dbReference type="SAM" id="MobiDB-lite"/>
    </source>
</evidence>
<evidence type="ECO:0000312" key="8">
    <source>
        <dbReference type="EMBL" id="EDV92824.1"/>
    </source>
</evidence>
<feature type="chain" id="PRO_0000375986" description="Diacylglycerol kinase eta">
    <location>
        <begin position="1"/>
        <end position="1941"/>
    </location>
</feature>
<feature type="domain" description="PH" evidence="3">
    <location>
        <begin position="93"/>
        <end position="186"/>
    </location>
</feature>
<feature type="domain" description="DAGKc" evidence="6">
    <location>
        <begin position="361"/>
        <end position="497"/>
    </location>
</feature>
<feature type="domain" description="SAM" evidence="4">
    <location>
        <begin position="1878"/>
        <end position="1941"/>
    </location>
</feature>
<feature type="zinc finger region" description="Phorbol-ester/DAG-type 1" evidence="5">
    <location>
        <begin position="206"/>
        <end position="256"/>
    </location>
</feature>
<feature type="zinc finger region" description="Phorbol-ester/DAG-type 2" evidence="5">
    <location>
        <begin position="279"/>
        <end position="330"/>
    </location>
</feature>
<feature type="region of interest" description="Disordered" evidence="7">
    <location>
        <begin position="1030"/>
        <end position="1068"/>
    </location>
</feature>
<feature type="region of interest" description="Disordered" evidence="7">
    <location>
        <begin position="1132"/>
        <end position="1164"/>
    </location>
</feature>
<feature type="region of interest" description="Disordered" evidence="7">
    <location>
        <begin position="1215"/>
        <end position="1257"/>
    </location>
</feature>
<feature type="region of interest" description="Disordered" evidence="7">
    <location>
        <begin position="1276"/>
        <end position="1295"/>
    </location>
</feature>
<feature type="compositionally biased region" description="Low complexity" evidence="7">
    <location>
        <begin position="1133"/>
        <end position="1155"/>
    </location>
</feature>
<keyword id="KW-0067">ATP-binding</keyword>
<keyword id="KW-0963">Cytoplasm</keyword>
<keyword id="KW-0418">Kinase</keyword>
<keyword id="KW-0479">Metal-binding</keyword>
<keyword id="KW-0547">Nucleotide-binding</keyword>
<keyword id="KW-0597">Phosphoprotein</keyword>
<keyword id="KW-1185">Reference proteome</keyword>
<keyword id="KW-0677">Repeat</keyword>
<keyword id="KW-0808">Transferase</keyword>
<keyword id="KW-0862">Zinc</keyword>
<keyword id="KW-0863">Zinc-finger</keyword>
<name>DGKH_DROGR</name>
<proteinExistence type="inferred from homology"/>
<comment type="function">
    <text evidence="1">Phosphorylates diacylglycerol (DAG) to generate phosphatidic acid (PA).</text>
</comment>
<comment type="catalytic activity">
    <reaction>
        <text>a 1,2-diacyl-sn-glycerol + ATP = a 1,2-diacyl-sn-glycero-3-phosphate + ADP + H(+)</text>
        <dbReference type="Rhea" id="RHEA:10272"/>
        <dbReference type="ChEBI" id="CHEBI:15378"/>
        <dbReference type="ChEBI" id="CHEBI:17815"/>
        <dbReference type="ChEBI" id="CHEBI:30616"/>
        <dbReference type="ChEBI" id="CHEBI:58608"/>
        <dbReference type="ChEBI" id="CHEBI:456216"/>
        <dbReference type="EC" id="2.7.1.107"/>
    </reaction>
</comment>
<comment type="subcellular location">
    <subcellularLocation>
        <location evidence="1">Cytoplasm</location>
    </subcellularLocation>
</comment>
<comment type="similarity">
    <text evidence="2">Belongs to the eukaryotic diacylglycerol kinase family.</text>
</comment>
<gene>
    <name type="ORF">GH18973</name>
</gene>